<sequence length="305" mass="33506">MLKQRTIKSIVKTVGIGVHSGRKIELTLRPAAPGTGIVFSRVDLPTPVDIPASAMSIGDTRLASVLQKDGVRVSTVEHLMSACAGLGIDNLYVDVTAEEIPIMDGSAATFVFLIQSAGIEEQNAPKRFIKVKKPVEIRDGDKFARLDPYFGFKLKFSIDFRHPAVDKTGQELEVDFATTSYVREIARARTFGFAHEAEMLREIGLARGGSMDNAIVLDEYRILNNDGLRYDDEFVKHKMLDAIGDLYVIGHPLLASYTAYKSGHGLNNALLRELLAHEDAYEIVTFDDPQAAPKGFAFDAQTAFA</sequence>
<accession>B4E5Y5</accession>
<keyword id="KW-0378">Hydrolase</keyword>
<keyword id="KW-0441">Lipid A biosynthesis</keyword>
<keyword id="KW-0444">Lipid biosynthesis</keyword>
<keyword id="KW-0443">Lipid metabolism</keyword>
<keyword id="KW-0479">Metal-binding</keyword>
<keyword id="KW-0862">Zinc</keyword>
<dbReference type="EC" id="3.5.1.108" evidence="1"/>
<dbReference type="EMBL" id="AM747720">
    <property type="protein sequence ID" value="CAR53778.1"/>
    <property type="molecule type" value="Genomic_DNA"/>
</dbReference>
<dbReference type="RefSeq" id="WP_006487145.1">
    <property type="nucleotide sequence ID" value="NC_011000.1"/>
</dbReference>
<dbReference type="SMR" id="B4E5Y5"/>
<dbReference type="GeneID" id="62009954"/>
<dbReference type="KEGG" id="bcj:BCAL3455"/>
<dbReference type="eggNOG" id="COG0774">
    <property type="taxonomic scope" value="Bacteria"/>
</dbReference>
<dbReference type="HOGENOM" id="CLU_046528_1_0_4"/>
<dbReference type="BioCyc" id="BCEN216591:G1G1V-3842-MONOMER"/>
<dbReference type="UniPathway" id="UPA00359">
    <property type="reaction ID" value="UER00478"/>
</dbReference>
<dbReference type="Proteomes" id="UP000001035">
    <property type="component" value="Chromosome 1"/>
</dbReference>
<dbReference type="GO" id="GO:0016020">
    <property type="term" value="C:membrane"/>
    <property type="evidence" value="ECO:0007669"/>
    <property type="project" value="GOC"/>
</dbReference>
<dbReference type="GO" id="GO:0046872">
    <property type="term" value="F:metal ion binding"/>
    <property type="evidence" value="ECO:0007669"/>
    <property type="project" value="UniProtKB-KW"/>
</dbReference>
<dbReference type="GO" id="GO:0103117">
    <property type="term" value="F:UDP-3-O-acyl-N-acetylglucosamine deacetylase activity"/>
    <property type="evidence" value="ECO:0007669"/>
    <property type="project" value="UniProtKB-UniRule"/>
</dbReference>
<dbReference type="GO" id="GO:0009245">
    <property type="term" value="P:lipid A biosynthetic process"/>
    <property type="evidence" value="ECO:0007669"/>
    <property type="project" value="UniProtKB-UniRule"/>
</dbReference>
<dbReference type="Gene3D" id="3.30.230.20">
    <property type="entry name" value="lpxc deacetylase, domain 1"/>
    <property type="match status" value="1"/>
</dbReference>
<dbReference type="Gene3D" id="3.30.1700.10">
    <property type="entry name" value="lpxc deacetylase, domain 2"/>
    <property type="match status" value="1"/>
</dbReference>
<dbReference type="HAMAP" id="MF_00388">
    <property type="entry name" value="LpxC"/>
    <property type="match status" value="1"/>
</dbReference>
<dbReference type="InterPro" id="IPR020568">
    <property type="entry name" value="Ribosomal_Su5_D2-typ_SF"/>
</dbReference>
<dbReference type="InterPro" id="IPR004463">
    <property type="entry name" value="UDP-acyl_GlcNac_deAcase"/>
</dbReference>
<dbReference type="InterPro" id="IPR011334">
    <property type="entry name" value="UDP-acyl_GlcNac_deAcase_C"/>
</dbReference>
<dbReference type="InterPro" id="IPR015870">
    <property type="entry name" value="UDP-acyl_N-AcGlcN_deAcase_N"/>
</dbReference>
<dbReference type="NCBIfam" id="TIGR00325">
    <property type="entry name" value="lpxC"/>
    <property type="match status" value="1"/>
</dbReference>
<dbReference type="PANTHER" id="PTHR33694">
    <property type="entry name" value="UDP-3-O-ACYL-N-ACETYLGLUCOSAMINE DEACETYLASE 1, MITOCHONDRIAL-RELATED"/>
    <property type="match status" value="1"/>
</dbReference>
<dbReference type="PANTHER" id="PTHR33694:SF1">
    <property type="entry name" value="UDP-3-O-ACYL-N-ACETYLGLUCOSAMINE DEACETYLASE 1, MITOCHONDRIAL-RELATED"/>
    <property type="match status" value="1"/>
</dbReference>
<dbReference type="Pfam" id="PF03331">
    <property type="entry name" value="LpxC"/>
    <property type="match status" value="1"/>
</dbReference>
<dbReference type="SUPFAM" id="SSF54211">
    <property type="entry name" value="Ribosomal protein S5 domain 2-like"/>
    <property type="match status" value="2"/>
</dbReference>
<feature type="chain" id="PRO_1000122767" description="UDP-3-O-acyl-N-acetylglucosamine deacetylase">
    <location>
        <begin position="1"/>
        <end position="305"/>
    </location>
</feature>
<feature type="active site" description="Proton donor" evidence="1">
    <location>
        <position position="264"/>
    </location>
</feature>
<feature type="binding site" evidence="1">
    <location>
        <position position="78"/>
    </location>
    <ligand>
        <name>Zn(2+)</name>
        <dbReference type="ChEBI" id="CHEBI:29105"/>
    </ligand>
</feature>
<feature type="binding site" evidence="1">
    <location>
        <position position="237"/>
    </location>
    <ligand>
        <name>Zn(2+)</name>
        <dbReference type="ChEBI" id="CHEBI:29105"/>
    </ligand>
</feature>
<feature type="binding site" evidence="1">
    <location>
        <position position="241"/>
    </location>
    <ligand>
        <name>Zn(2+)</name>
        <dbReference type="ChEBI" id="CHEBI:29105"/>
    </ligand>
</feature>
<organism>
    <name type="scientific">Burkholderia cenocepacia (strain ATCC BAA-245 / DSM 16553 / LMG 16656 / NCTC 13227 / J2315 / CF5610)</name>
    <name type="common">Burkholderia cepacia (strain J2315)</name>
    <dbReference type="NCBI Taxonomy" id="216591"/>
    <lineage>
        <taxon>Bacteria</taxon>
        <taxon>Pseudomonadati</taxon>
        <taxon>Pseudomonadota</taxon>
        <taxon>Betaproteobacteria</taxon>
        <taxon>Burkholderiales</taxon>
        <taxon>Burkholderiaceae</taxon>
        <taxon>Burkholderia</taxon>
        <taxon>Burkholderia cepacia complex</taxon>
    </lineage>
</organism>
<comment type="function">
    <text evidence="1">Catalyzes the hydrolysis of UDP-3-O-myristoyl-N-acetylglucosamine to form UDP-3-O-myristoylglucosamine and acetate, the committed step in lipid A biosynthesis.</text>
</comment>
<comment type="catalytic activity">
    <reaction evidence="1">
        <text>a UDP-3-O-[(3R)-3-hydroxyacyl]-N-acetyl-alpha-D-glucosamine + H2O = a UDP-3-O-[(3R)-3-hydroxyacyl]-alpha-D-glucosamine + acetate</text>
        <dbReference type="Rhea" id="RHEA:67816"/>
        <dbReference type="ChEBI" id="CHEBI:15377"/>
        <dbReference type="ChEBI" id="CHEBI:30089"/>
        <dbReference type="ChEBI" id="CHEBI:137740"/>
        <dbReference type="ChEBI" id="CHEBI:173225"/>
        <dbReference type="EC" id="3.5.1.108"/>
    </reaction>
</comment>
<comment type="cofactor">
    <cofactor evidence="1">
        <name>Zn(2+)</name>
        <dbReference type="ChEBI" id="CHEBI:29105"/>
    </cofactor>
</comment>
<comment type="pathway">
    <text evidence="1">Glycolipid biosynthesis; lipid IV(A) biosynthesis; lipid IV(A) from (3R)-3-hydroxytetradecanoyl-[acyl-carrier-protein] and UDP-N-acetyl-alpha-D-glucosamine: step 2/6.</text>
</comment>
<comment type="similarity">
    <text evidence="1">Belongs to the LpxC family.</text>
</comment>
<reference key="1">
    <citation type="journal article" date="2009" name="J. Bacteriol.">
        <title>The genome of Burkholderia cenocepacia J2315, an epidemic pathogen of cystic fibrosis patients.</title>
        <authorList>
            <person name="Holden M.T."/>
            <person name="Seth-Smith H.M."/>
            <person name="Crossman L.C."/>
            <person name="Sebaihia M."/>
            <person name="Bentley S.D."/>
            <person name="Cerdeno-Tarraga A.M."/>
            <person name="Thomson N.R."/>
            <person name="Bason N."/>
            <person name="Quail M.A."/>
            <person name="Sharp S."/>
            <person name="Cherevach I."/>
            <person name="Churcher C."/>
            <person name="Goodhead I."/>
            <person name="Hauser H."/>
            <person name="Holroyd N."/>
            <person name="Mungall K."/>
            <person name="Scott P."/>
            <person name="Walker D."/>
            <person name="White B."/>
            <person name="Rose H."/>
            <person name="Iversen P."/>
            <person name="Mil-Homens D."/>
            <person name="Rocha E.P."/>
            <person name="Fialho A.M."/>
            <person name="Baldwin A."/>
            <person name="Dowson C."/>
            <person name="Barrell B.G."/>
            <person name="Govan J.R."/>
            <person name="Vandamme P."/>
            <person name="Hart C.A."/>
            <person name="Mahenthiralingam E."/>
            <person name="Parkhill J."/>
        </authorList>
    </citation>
    <scope>NUCLEOTIDE SEQUENCE [LARGE SCALE GENOMIC DNA]</scope>
    <source>
        <strain>ATCC BAA-245 / DSM 16553 / LMG 16656 / NCTC 13227 / J2315 / CF5610</strain>
    </source>
</reference>
<protein>
    <recommendedName>
        <fullName evidence="1">UDP-3-O-acyl-N-acetylglucosamine deacetylase</fullName>
        <shortName evidence="1">UDP-3-O-acyl-GlcNAc deacetylase</shortName>
        <ecNumber evidence="1">3.5.1.108</ecNumber>
    </recommendedName>
    <alternativeName>
        <fullName evidence="1">UDP-3-O-[R-3-hydroxymyristoyl]-N-acetylglucosamine deacetylase</fullName>
    </alternativeName>
</protein>
<name>LPXC_BURCJ</name>
<evidence type="ECO:0000255" key="1">
    <source>
        <dbReference type="HAMAP-Rule" id="MF_00388"/>
    </source>
</evidence>
<gene>
    <name evidence="1" type="primary">lpxC</name>
    <name type="ordered locus">BceJ2315_33930</name>
    <name type="ORF">BCAL3455</name>
</gene>
<proteinExistence type="inferred from homology"/>